<sequence length="150" mass="16401">MPIVDTGSVAPLSAAEKTKIRSAWAPVYSTYETSGVDILVKFFTSTPAAQEFFPKFKGLTTADQLKKSADVRWHAERIINAVNDAVASMDDTEKMSMKLRDLSGKHAKSFQVDPQYFKVLAAVIADTVAAGDAGFEKLMSMICILLRSAY</sequence>
<organism>
    <name type="scientific">Petromyzon marinus</name>
    <name type="common">Sea lamprey</name>
    <dbReference type="NCBI Taxonomy" id="7757"/>
    <lineage>
        <taxon>Eukaryota</taxon>
        <taxon>Metazoa</taxon>
        <taxon>Chordata</taxon>
        <taxon>Craniata</taxon>
        <taxon>Vertebrata</taxon>
        <taxon>Cyclostomata</taxon>
        <taxon>Hyperoartia</taxon>
        <taxon>Petromyzontiformes</taxon>
        <taxon>Petromyzontidae</taxon>
        <taxon>Petromyzon</taxon>
    </lineage>
</organism>
<dbReference type="PIR" id="A90676">
    <property type="entry name" value="GGLMS"/>
</dbReference>
<dbReference type="RefSeq" id="XP_032826327.1">
    <property type="nucleotide sequence ID" value="XM_032970436.1"/>
</dbReference>
<dbReference type="RefSeq" id="XP_032826338.1">
    <property type="nucleotide sequence ID" value="XM_032970447.1"/>
</dbReference>
<dbReference type="PDB" id="1F5O">
    <property type="method" value="X-ray"/>
    <property type="resolution" value="2.90 A"/>
    <property type="chains" value="A/B/C/D/E/F=2-150"/>
</dbReference>
<dbReference type="PDB" id="1F5P">
    <property type="method" value="X-ray"/>
    <property type="resolution" value="2.90 A"/>
    <property type="chains" value="A/B/C/D/E/F=2-150"/>
</dbReference>
<dbReference type="PDB" id="2LHB">
    <property type="method" value="X-ray"/>
    <property type="resolution" value="2.00 A"/>
    <property type="chains" value="A=2-150"/>
</dbReference>
<dbReference type="PDB" id="3LHB">
    <property type="method" value="X-ray"/>
    <property type="resolution" value="2.70 A"/>
    <property type="chains" value="A/B/C/D/E/F/G/H/I/J/K/L=2-150"/>
</dbReference>
<dbReference type="PDBsum" id="1F5O"/>
<dbReference type="PDBsum" id="1F5P"/>
<dbReference type="PDBsum" id="2LHB"/>
<dbReference type="PDBsum" id="3LHB"/>
<dbReference type="SMR" id="P02208"/>
<dbReference type="STRING" id="7757.ENSPMAP00000005891"/>
<dbReference type="Ensembl" id="ENSPMAT00000005918.1">
    <property type="protein sequence ID" value="ENSPMAP00000005891.1"/>
    <property type="gene ID" value="ENSPMAG00000005343.1"/>
</dbReference>
<dbReference type="Ensembl" id="ENSPMAT00000005931.1">
    <property type="protein sequence ID" value="ENSPMAP00000005904.1"/>
    <property type="gene ID" value="ENSPMAG00000005354.1"/>
</dbReference>
<dbReference type="GeneID" id="116951647"/>
<dbReference type="GeneID" id="116951653"/>
<dbReference type="GeneTree" id="ENSGT00940000155004"/>
<dbReference type="HOGENOM" id="CLU_003827_10_1_1"/>
<dbReference type="OMA" id="MPIVDQG"/>
<dbReference type="OrthoDB" id="436496at2759"/>
<dbReference type="TreeFam" id="TF332967"/>
<dbReference type="EvolutionaryTrace" id="P02208"/>
<dbReference type="Proteomes" id="UP001318040">
    <property type="component" value="Chromosome 43"/>
</dbReference>
<dbReference type="GO" id="GO:0020037">
    <property type="term" value="F:heme binding"/>
    <property type="evidence" value="ECO:0007669"/>
    <property type="project" value="InterPro"/>
</dbReference>
<dbReference type="GO" id="GO:0005506">
    <property type="term" value="F:iron ion binding"/>
    <property type="evidence" value="ECO:0007669"/>
    <property type="project" value="InterPro"/>
</dbReference>
<dbReference type="GO" id="GO:0016491">
    <property type="term" value="F:oxidoreductase activity"/>
    <property type="evidence" value="ECO:0007669"/>
    <property type="project" value="UniProtKB-ARBA"/>
</dbReference>
<dbReference type="GO" id="GO:0019825">
    <property type="term" value="F:oxygen binding"/>
    <property type="evidence" value="ECO:0007669"/>
    <property type="project" value="InterPro"/>
</dbReference>
<dbReference type="GO" id="GO:0005344">
    <property type="term" value="F:oxygen carrier activity"/>
    <property type="evidence" value="ECO:0007669"/>
    <property type="project" value="UniProtKB-KW"/>
</dbReference>
<dbReference type="Gene3D" id="1.10.490.10">
    <property type="entry name" value="Globins"/>
    <property type="match status" value="1"/>
</dbReference>
<dbReference type="InterPro" id="IPR000971">
    <property type="entry name" value="Globin"/>
</dbReference>
<dbReference type="InterPro" id="IPR009050">
    <property type="entry name" value="Globin-like_sf"/>
</dbReference>
<dbReference type="InterPro" id="IPR012292">
    <property type="entry name" value="Globin/Proto"/>
</dbReference>
<dbReference type="InterPro" id="IPR013314">
    <property type="entry name" value="Globin_lamprey/hagfish"/>
</dbReference>
<dbReference type="PANTHER" id="PTHR46783">
    <property type="entry name" value="CYTOGLOBIN"/>
    <property type="match status" value="1"/>
</dbReference>
<dbReference type="PANTHER" id="PTHR46783:SF1">
    <property type="entry name" value="CYTOGLOBIN-1-RELATED"/>
    <property type="match status" value="1"/>
</dbReference>
<dbReference type="Pfam" id="PF00042">
    <property type="entry name" value="Globin"/>
    <property type="match status" value="1"/>
</dbReference>
<dbReference type="PRINTS" id="PR01906">
    <property type="entry name" value="FISHGLOBIN"/>
</dbReference>
<dbReference type="SUPFAM" id="SSF46458">
    <property type="entry name" value="Globin-like"/>
    <property type="match status" value="1"/>
</dbReference>
<dbReference type="PROSITE" id="PS01033">
    <property type="entry name" value="GLOBIN"/>
    <property type="match status" value="1"/>
</dbReference>
<evidence type="ECO:0000250" key="1"/>
<evidence type="ECO:0000255" key="2">
    <source>
        <dbReference type="PROSITE-ProRule" id="PRU00238"/>
    </source>
</evidence>
<evidence type="ECO:0000269" key="3">
    <source>
    </source>
</evidence>
<evidence type="ECO:0000305" key="4"/>
<evidence type="ECO:0007829" key="5">
    <source>
        <dbReference type="PDB" id="3LHB"/>
    </source>
</evidence>
<feature type="initiator methionine" description="Removed" evidence="1">
    <location>
        <position position="1"/>
    </location>
</feature>
<feature type="chain" id="PRO_0000052529" description="Globin-5">
    <location>
        <begin position="2"/>
        <end position="150"/>
    </location>
</feature>
<feature type="domain" description="Globin" evidence="2">
    <location>
        <begin position="11"/>
        <end position="150"/>
    </location>
</feature>
<feature type="binding site" description="distal binding residue" evidence="2 3">
    <location>
        <position position="74"/>
    </location>
    <ligand>
        <name>heme b</name>
        <dbReference type="ChEBI" id="CHEBI:60344"/>
    </ligand>
    <ligandPart>
        <name>Fe</name>
        <dbReference type="ChEBI" id="CHEBI:18248"/>
    </ligandPart>
</feature>
<feature type="binding site" description="proximal binding residue" evidence="2 3">
    <location>
        <position position="106"/>
    </location>
    <ligand>
        <name>heme b</name>
        <dbReference type="ChEBI" id="CHEBI:60344"/>
    </ligand>
    <ligandPart>
        <name>Fe</name>
        <dbReference type="ChEBI" id="CHEBI:18248"/>
    </ligandPart>
</feature>
<feature type="sequence variant">
    <original>T</original>
    <variation>N</variation>
    <location>
        <position position="30"/>
    </location>
</feature>
<feature type="sequence conflict" description="In Ref. 3." evidence="4" ref="3">
    <original>S</original>
    <variation>SS</variation>
    <location>
        <position position="96"/>
    </location>
</feature>
<feature type="sequence conflict" description="In Ref. 2; AA sequence and 3." evidence="4" ref="2 3">
    <location>
        <begin position="99"/>
        <end position="100"/>
    </location>
</feature>
<feature type="sequence conflict" description="In Ref. 2; AA sequence." evidence="4" ref="2">
    <original>D</original>
    <variation>N</variation>
    <location>
        <position position="101"/>
    </location>
</feature>
<feature type="sequence conflict" description="In Ref. 2; AA sequence and 3." evidence="4" ref="2 3">
    <original>M</original>
    <variation>R</variation>
    <location>
        <position position="139"/>
    </location>
</feature>
<feature type="sequence conflict" description="In Ref. 2; AA sequence." evidence="4" ref="2">
    <location>
        <position position="140"/>
    </location>
</feature>
<feature type="helix" evidence="5">
    <location>
        <begin position="14"/>
        <end position="29"/>
    </location>
</feature>
<feature type="helix" evidence="5">
    <location>
        <begin position="31"/>
        <end position="45"/>
    </location>
</feature>
<feature type="helix" evidence="5">
    <location>
        <begin position="47"/>
        <end position="52"/>
    </location>
</feature>
<feature type="helix" evidence="5">
    <location>
        <begin position="54"/>
        <end position="56"/>
    </location>
</feature>
<feature type="helix" evidence="5">
    <location>
        <begin position="62"/>
        <end position="67"/>
    </location>
</feature>
<feature type="helix" evidence="5">
    <location>
        <begin position="69"/>
        <end position="87"/>
    </location>
</feature>
<feature type="turn" evidence="5">
    <location>
        <begin position="88"/>
        <end position="90"/>
    </location>
</feature>
<feature type="helix" evidence="5">
    <location>
        <begin position="92"/>
        <end position="108"/>
    </location>
</feature>
<feature type="helix" evidence="5">
    <location>
        <begin position="114"/>
        <end position="116"/>
    </location>
</feature>
<feature type="helix" evidence="5">
    <location>
        <begin position="117"/>
        <end position="129"/>
    </location>
</feature>
<feature type="helix" evidence="5">
    <location>
        <begin position="133"/>
        <end position="147"/>
    </location>
</feature>
<protein>
    <recommendedName>
        <fullName>Globin-5</fullName>
    </recommendedName>
    <alternativeName>
        <fullName>Hemoglobin V</fullName>
    </alternativeName>
</protein>
<accession>P02208</accession>
<name>GLB5_PETMA</name>
<keyword id="KW-0002">3D-structure</keyword>
<keyword id="KW-0903">Direct protein sequencing</keyword>
<keyword id="KW-0349">Heme</keyword>
<keyword id="KW-0408">Iron</keyword>
<keyword id="KW-0479">Metal-binding</keyword>
<keyword id="KW-0561">Oxygen transport</keyword>
<keyword id="KW-0813">Transport</keyword>
<proteinExistence type="evidence at protein level"/>
<comment type="subunit">
    <text>Monomer at high oxygen tension and high pH and dimeric at low oxygen tension and lower pH.</text>
</comment>
<comment type="miscellaneous">
    <text>Globin V is the major component of the 6 globins found in the Sea lamprey.</text>
</comment>
<comment type="similarity">
    <text evidence="2">Belongs to the globin family.</text>
</comment>
<reference key="1">
    <citation type="journal article" date="1983" name="Biochimie">
        <title>Haemoglobins, LX. Primary structure of the major haemoglobin of the sea lamprey Petromyzon marinus (var. Garonne, Loire).</title>
        <authorList>
            <person name="Hombrados I."/>
            <person name="Rodewald K."/>
            <person name="Neuzil E."/>
            <person name="Braunitzer G."/>
        </authorList>
    </citation>
    <scope>PROTEIN SEQUENCE OF 2-150</scope>
</reference>
<reference key="2">
    <citation type="journal article" date="1970" name="J. Biol. Chem.">
        <title>The amino acid sequence of hemoglobin V from the lamprey, Petromyzon marinus.</title>
        <authorList>
            <person name="Li S.L."/>
            <person name="Riggs A."/>
        </authorList>
    </citation>
    <scope>PROTEIN SEQUENCE OF 2-150</scope>
</reference>
<reference key="3">
    <citation type="journal article" date="1973" name="J. Mol. Biol.">
        <title>Crystal structure analysis of sea lamprey hemoglobin at 2-A resolution.</title>
        <authorList>
            <person name="Hendrickson W.A."/>
            <person name="Love W.E."/>
            <person name="Karle J."/>
        </authorList>
    </citation>
    <scope>X-RAY CRYSTALLOGRAPHY (2.0 ANGSTROMS)</scope>
</reference>
<reference key="4">
    <citation type="journal article" date="1985" name="J. Mol. Biol.">
        <title>Refinement of a molecular model for lamprey hemoglobin from Petromyzon marinus.</title>
        <authorList>
            <person name="Honzatko R.B."/>
            <person name="Hendrickson W.A."/>
            <person name="Love W.E."/>
        </authorList>
    </citation>
    <scope>X-RAY CRYSTALLOGRAPHY (2.0 ANGSTROMS)</scope>
</reference>
<reference key="5">
    <citation type="journal article" date="1999" name="Structure">
        <title>The 2.7-A crystal structure of deoxygenated hemoglobin from the sea lamprey (Petromyzon marinus): structural basis for a lowered oxygen affinity and Bohr effect.</title>
        <authorList>
            <person name="Heaslet H.A."/>
            <person name="Royer W.E. Jr."/>
        </authorList>
    </citation>
    <scope>X-RAY CRYSTALLOGRAPHY (2.7 ANGSTROMS)</scope>
</reference>